<accession>Q1W3E0</accession>
<accession>D3RVT1</accession>
<organism>
    <name type="scientific">Allochromatium vinosum (strain ATCC 17899 / DSM 180 / NBRC 103801 / NCIMB 10441 / D)</name>
    <name type="common">Chromatium vinosum</name>
    <dbReference type="NCBI Taxonomy" id="572477"/>
    <lineage>
        <taxon>Bacteria</taxon>
        <taxon>Pseudomonadati</taxon>
        <taxon>Pseudomonadota</taxon>
        <taxon>Gammaproteobacteria</taxon>
        <taxon>Chromatiales</taxon>
        <taxon>Chromatiaceae</taxon>
        <taxon>Allochromatium</taxon>
    </lineage>
</organism>
<proteinExistence type="inferred from homology"/>
<comment type="function">
    <text evidence="1">Specifically methylates the guanine in position 2445 (m2G2445) and the guanine in position 2069 (m7G2069) of 23S rRNA.</text>
</comment>
<comment type="catalytic activity">
    <reaction evidence="1">
        <text>guanosine(2445) in 23S rRNA + S-adenosyl-L-methionine = N(2)-methylguanosine(2445) in 23S rRNA + S-adenosyl-L-homocysteine + H(+)</text>
        <dbReference type="Rhea" id="RHEA:42740"/>
        <dbReference type="Rhea" id="RHEA-COMP:10215"/>
        <dbReference type="Rhea" id="RHEA-COMP:10216"/>
        <dbReference type="ChEBI" id="CHEBI:15378"/>
        <dbReference type="ChEBI" id="CHEBI:57856"/>
        <dbReference type="ChEBI" id="CHEBI:59789"/>
        <dbReference type="ChEBI" id="CHEBI:74269"/>
        <dbReference type="ChEBI" id="CHEBI:74481"/>
        <dbReference type="EC" id="2.1.1.173"/>
    </reaction>
</comment>
<comment type="catalytic activity">
    <reaction evidence="1">
        <text>guanosine(2069) in 23S rRNA + S-adenosyl-L-methionine = N(2)-methylguanosine(2069) in 23S rRNA + S-adenosyl-L-homocysteine + H(+)</text>
        <dbReference type="Rhea" id="RHEA:43772"/>
        <dbReference type="Rhea" id="RHEA-COMP:10688"/>
        <dbReference type="Rhea" id="RHEA-COMP:10689"/>
        <dbReference type="ChEBI" id="CHEBI:15378"/>
        <dbReference type="ChEBI" id="CHEBI:57856"/>
        <dbReference type="ChEBI" id="CHEBI:59789"/>
        <dbReference type="ChEBI" id="CHEBI:74269"/>
        <dbReference type="ChEBI" id="CHEBI:74481"/>
        <dbReference type="EC" id="2.1.1.264"/>
    </reaction>
</comment>
<comment type="subcellular location">
    <subcellularLocation>
        <location evidence="1">Cytoplasm</location>
    </subcellularLocation>
</comment>
<comment type="similarity">
    <text evidence="1">Belongs to the methyltransferase superfamily. RlmKL family.</text>
</comment>
<sequence length="735" mass="82627">MSDHIFFASAPKHLGSLLAEELTRLGMAGAAETRGGARFSGRIEDGYRACLWSRIANRILLPLAQVSLGGPDEIHDSALEIPWEDHLTPDRTFAIQFDGQLQGVTNPHFAILQVKDAIADRFNRLYGRRPSVDPDDPDLRIHLYGNRDSLSFSLDLSGESLHQRGYRDAGSAAPLKENLAAALLLRAGWPEIAAEGGALLDPMCGSGTLIIEGALIAADIAPGLLRERFGFHGWTQHDEPAWQRLLAEARLRRTAGLKRLGSLRGYDVNPNAIRTSLHHLERAGLAGLAHFERRELSDCHPGREDDEGLVIVNPPYGERLGADEDLTQLYARLGSVLKERFVGWRAAVFTSSPELGKSLGLRATRIHSLYNGPIECRLLSFQIEPRYFVSHLPRPLPPEERSPGAAMFANRLSKNLKALRKWRQRDGIDCLRIYDADLPEYALAIDLYEGERRWVHVQEYAAPPSVDPKRARQRLREALGLIPEVLEVPGEQVFLKVRRQQKGRAQYERLAETGRFHEVSEYGLRFLVNFEDYLDTGLFLDHRDVRRLIGSLSDGKRFLNLFAYTGTATVHAAKGGAASTTTVDLSRTYLEWAGRNLELNGIRGPNHQLIQADCLRWIDSMAGQRRFDLIFLDPPSFSTSKRMHGTLDIQRDHVDIIQATMRLLEPGGRLIFSNNLRRFRIDLEGLAPFEVSDISAQTLPRDFARNPRIHNCWVIQHPESASNRRNGSDDEDRHA</sequence>
<name>RLMKL_ALLVD</name>
<feature type="chain" id="PRO_0000366729" description="Ribosomal RNA large subunit methyltransferase K/L">
    <location>
        <begin position="1"/>
        <end position="735"/>
    </location>
</feature>
<feature type="domain" description="THUMP" evidence="1">
    <location>
        <begin position="45"/>
        <end position="156"/>
    </location>
</feature>
<dbReference type="EC" id="2.1.1.173" evidence="1"/>
<dbReference type="EC" id="2.1.1.264" evidence="1"/>
<dbReference type="EMBL" id="DQ441405">
    <property type="protein sequence ID" value="ABE01365.1"/>
    <property type="molecule type" value="Genomic_DNA"/>
</dbReference>
<dbReference type="EMBL" id="CP001896">
    <property type="protein sequence ID" value="ADC63094.1"/>
    <property type="molecule type" value="Genomic_DNA"/>
</dbReference>
<dbReference type="RefSeq" id="WP_012971366.1">
    <property type="nucleotide sequence ID" value="NC_013851.1"/>
</dbReference>
<dbReference type="SMR" id="Q1W3E0"/>
<dbReference type="STRING" id="572477.Alvin_2173"/>
<dbReference type="KEGG" id="alv:Alvin_2173"/>
<dbReference type="eggNOG" id="COG0116">
    <property type="taxonomic scope" value="Bacteria"/>
</dbReference>
<dbReference type="eggNOG" id="COG1092">
    <property type="taxonomic scope" value="Bacteria"/>
</dbReference>
<dbReference type="HOGENOM" id="CLU_014042_2_0_6"/>
<dbReference type="OrthoDB" id="9809404at2"/>
<dbReference type="Proteomes" id="UP000001441">
    <property type="component" value="Chromosome"/>
</dbReference>
<dbReference type="GO" id="GO:0005737">
    <property type="term" value="C:cytoplasm"/>
    <property type="evidence" value="ECO:0007669"/>
    <property type="project" value="UniProtKB-SubCell"/>
</dbReference>
<dbReference type="GO" id="GO:0052915">
    <property type="term" value="F:23S rRNA (guanine(2445)-N(2))-methyltransferase activity"/>
    <property type="evidence" value="ECO:0007669"/>
    <property type="project" value="UniProtKB-UniRule"/>
</dbReference>
<dbReference type="GO" id="GO:0003723">
    <property type="term" value="F:RNA binding"/>
    <property type="evidence" value="ECO:0007669"/>
    <property type="project" value="UniProtKB-KW"/>
</dbReference>
<dbReference type="GO" id="GO:0070043">
    <property type="term" value="F:rRNA (guanine-N7-)-methyltransferase activity"/>
    <property type="evidence" value="ECO:0007669"/>
    <property type="project" value="UniProtKB-UniRule"/>
</dbReference>
<dbReference type="CDD" id="cd02440">
    <property type="entry name" value="AdoMet_MTases"/>
    <property type="match status" value="1"/>
</dbReference>
<dbReference type="CDD" id="cd11715">
    <property type="entry name" value="THUMP_AdoMetMT"/>
    <property type="match status" value="1"/>
</dbReference>
<dbReference type="Gene3D" id="3.30.2130.30">
    <property type="match status" value="1"/>
</dbReference>
<dbReference type="Gene3D" id="3.30.750.80">
    <property type="entry name" value="RNA methyltransferase domain (HRMD) like"/>
    <property type="match status" value="1"/>
</dbReference>
<dbReference type="Gene3D" id="3.40.50.150">
    <property type="entry name" value="Vaccinia Virus protein VP39"/>
    <property type="match status" value="2"/>
</dbReference>
<dbReference type="HAMAP" id="MF_01858">
    <property type="entry name" value="23SrRNA_methyltr_KL"/>
    <property type="match status" value="1"/>
</dbReference>
<dbReference type="InterPro" id="IPR017244">
    <property type="entry name" value="23SrRNA_methyltr_KL"/>
</dbReference>
<dbReference type="InterPro" id="IPR002052">
    <property type="entry name" value="DNA_methylase_N6_adenine_CS"/>
</dbReference>
<dbReference type="InterPro" id="IPR000241">
    <property type="entry name" value="RlmKL-like_Mtase"/>
</dbReference>
<dbReference type="InterPro" id="IPR053943">
    <property type="entry name" value="RlmKL-like_Mtase_CS"/>
</dbReference>
<dbReference type="InterPro" id="IPR054170">
    <property type="entry name" value="RlmL_1st"/>
</dbReference>
<dbReference type="InterPro" id="IPR019614">
    <property type="entry name" value="SAM-dep_methyl-trfase"/>
</dbReference>
<dbReference type="InterPro" id="IPR029063">
    <property type="entry name" value="SAM-dependent_MTases_sf"/>
</dbReference>
<dbReference type="InterPro" id="IPR004114">
    <property type="entry name" value="THUMP_dom"/>
</dbReference>
<dbReference type="NCBIfam" id="NF008748">
    <property type="entry name" value="PRK11783.1"/>
    <property type="match status" value="1"/>
</dbReference>
<dbReference type="PANTHER" id="PTHR47313">
    <property type="entry name" value="RIBOSOMAL RNA LARGE SUBUNIT METHYLTRANSFERASE K/L"/>
    <property type="match status" value="1"/>
</dbReference>
<dbReference type="PANTHER" id="PTHR47313:SF1">
    <property type="entry name" value="RIBOSOMAL RNA LARGE SUBUNIT METHYLTRANSFERASE K_L"/>
    <property type="match status" value="1"/>
</dbReference>
<dbReference type="Pfam" id="PF10672">
    <property type="entry name" value="Methyltrans_SAM"/>
    <property type="match status" value="1"/>
</dbReference>
<dbReference type="Pfam" id="PF22020">
    <property type="entry name" value="RlmL_1st"/>
    <property type="match status" value="1"/>
</dbReference>
<dbReference type="Pfam" id="PF02926">
    <property type="entry name" value="THUMP"/>
    <property type="match status" value="1"/>
</dbReference>
<dbReference type="Pfam" id="PF01170">
    <property type="entry name" value="UPF0020"/>
    <property type="match status" value="1"/>
</dbReference>
<dbReference type="PIRSF" id="PIRSF037618">
    <property type="entry name" value="RNA_Mtase_bacteria_prd"/>
    <property type="match status" value="1"/>
</dbReference>
<dbReference type="SMART" id="SM00981">
    <property type="entry name" value="THUMP"/>
    <property type="match status" value="1"/>
</dbReference>
<dbReference type="SUPFAM" id="SSF53335">
    <property type="entry name" value="S-adenosyl-L-methionine-dependent methyltransferases"/>
    <property type="match status" value="2"/>
</dbReference>
<dbReference type="PROSITE" id="PS51165">
    <property type="entry name" value="THUMP"/>
    <property type="match status" value="1"/>
</dbReference>
<dbReference type="PROSITE" id="PS01261">
    <property type="entry name" value="UPF0020"/>
    <property type="match status" value="1"/>
</dbReference>
<evidence type="ECO:0000255" key="1">
    <source>
        <dbReference type="HAMAP-Rule" id="MF_01858"/>
    </source>
</evidence>
<protein>
    <recommendedName>
        <fullName evidence="1">Ribosomal RNA large subunit methyltransferase K/L</fullName>
    </recommendedName>
    <domain>
        <recommendedName>
            <fullName evidence="1">23S rRNA m2G2445 methyltransferase</fullName>
            <ecNumber evidence="1">2.1.1.173</ecNumber>
        </recommendedName>
        <alternativeName>
            <fullName evidence="1">rRNA (guanine-N(2)-)-methyltransferase RlmL</fullName>
        </alternativeName>
    </domain>
    <domain>
        <recommendedName>
            <fullName evidence="1">23S rRNA m7G2069 methyltransferase</fullName>
            <ecNumber evidence="1">2.1.1.264</ecNumber>
        </recommendedName>
        <alternativeName>
            <fullName evidence="1">rRNA (guanine-N(7)-)-methyltransferase RlmK</fullName>
        </alternativeName>
    </domain>
</protein>
<gene>
    <name evidence="1" type="primary">rlmL</name>
    <name type="ordered locus">Alvin_2173</name>
</gene>
<reference key="1">
    <citation type="journal article" date="2006" name="Mol. Microbiol.">
        <title>Thiosulphate oxidation in the phototrophic sulphur bacterium Allochromatium vinosum.</title>
        <authorList>
            <person name="Hensen D."/>
            <person name="Sperling D."/>
            <person name="Trueper H.G."/>
            <person name="Brune D.C."/>
            <person name="Dahl C."/>
        </authorList>
    </citation>
    <scope>NUCLEOTIDE SEQUENCE [GENOMIC DNA]</scope>
</reference>
<reference key="2">
    <citation type="journal article" date="2011" name="Stand. Genomic Sci.">
        <title>Complete genome sequence of Allochromatium vinosum DSM 180(T).</title>
        <authorList>
            <person name="Weissgerber T."/>
            <person name="Zigann R."/>
            <person name="Bruce D."/>
            <person name="Chang Y.J."/>
            <person name="Detter J.C."/>
            <person name="Han C."/>
            <person name="Hauser L."/>
            <person name="Jeffries C.D."/>
            <person name="Land M."/>
            <person name="Munk A.C."/>
            <person name="Tapia R."/>
            <person name="Dahl C."/>
        </authorList>
    </citation>
    <scope>NUCLEOTIDE SEQUENCE [LARGE SCALE GENOMIC DNA]</scope>
    <source>
        <strain>ATCC 17899 / DSM 180 / NBRC 103801 / NCIMB 10441 / D</strain>
    </source>
</reference>
<keyword id="KW-0963">Cytoplasm</keyword>
<keyword id="KW-0489">Methyltransferase</keyword>
<keyword id="KW-1185">Reference proteome</keyword>
<keyword id="KW-0694">RNA-binding</keyword>
<keyword id="KW-0698">rRNA processing</keyword>
<keyword id="KW-0949">S-adenosyl-L-methionine</keyword>
<keyword id="KW-0808">Transferase</keyword>